<organism>
    <name type="scientific">Desulforudis audaxviator (strain MP104C)</name>
    <dbReference type="NCBI Taxonomy" id="477974"/>
    <lineage>
        <taxon>Bacteria</taxon>
        <taxon>Bacillati</taxon>
        <taxon>Bacillota</taxon>
        <taxon>Clostridia</taxon>
        <taxon>Thermoanaerobacterales</taxon>
        <taxon>Candidatus Desulforudaceae</taxon>
        <taxon>Candidatus Desulforudis</taxon>
    </lineage>
</organism>
<gene>
    <name evidence="1" type="primary">rpsK</name>
    <name type="ordered locus">Daud_0251</name>
</gene>
<protein>
    <recommendedName>
        <fullName evidence="1">Small ribosomal subunit protein uS11</fullName>
    </recommendedName>
    <alternativeName>
        <fullName evidence="2">30S ribosomal protein S11</fullName>
    </alternativeName>
</protein>
<comment type="function">
    <text evidence="1">Located on the platform of the 30S subunit, it bridges several disparate RNA helices of the 16S rRNA. Forms part of the Shine-Dalgarno cleft in the 70S ribosome.</text>
</comment>
<comment type="subunit">
    <text evidence="1">Part of the 30S ribosomal subunit. Interacts with proteins S7 and S18. Binds to IF-3.</text>
</comment>
<comment type="similarity">
    <text evidence="1">Belongs to the universal ribosomal protein uS11 family.</text>
</comment>
<evidence type="ECO:0000255" key="1">
    <source>
        <dbReference type="HAMAP-Rule" id="MF_01310"/>
    </source>
</evidence>
<evidence type="ECO:0000305" key="2"/>
<proteinExistence type="inferred from homology"/>
<dbReference type="EMBL" id="CP000860">
    <property type="protein sequence ID" value="ACA58812.1"/>
    <property type="molecule type" value="Genomic_DNA"/>
</dbReference>
<dbReference type="RefSeq" id="WP_012301404.1">
    <property type="nucleotide sequence ID" value="NC_010424.1"/>
</dbReference>
<dbReference type="SMR" id="B1I1B1"/>
<dbReference type="STRING" id="477974.Daud_0251"/>
<dbReference type="KEGG" id="dau:Daud_0251"/>
<dbReference type="eggNOG" id="COG0100">
    <property type="taxonomic scope" value="Bacteria"/>
</dbReference>
<dbReference type="HOGENOM" id="CLU_072439_5_0_9"/>
<dbReference type="OrthoDB" id="9806415at2"/>
<dbReference type="Proteomes" id="UP000008544">
    <property type="component" value="Chromosome"/>
</dbReference>
<dbReference type="GO" id="GO:1990904">
    <property type="term" value="C:ribonucleoprotein complex"/>
    <property type="evidence" value="ECO:0007669"/>
    <property type="project" value="UniProtKB-KW"/>
</dbReference>
<dbReference type="GO" id="GO:0005840">
    <property type="term" value="C:ribosome"/>
    <property type="evidence" value="ECO:0007669"/>
    <property type="project" value="UniProtKB-KW"/>
</dbReference>
<dbReference type="GO" id="GO:0019843">
    <property type="term" value="F:rRNA binding"/>
    <property type="evidence" value="ECO:0007669"/>
    <property type="project" value="UniProtKB-UniRule"/>
</dbReference>
<dbReference type="GO" id="GO:0003735">
    <property type="term" value="F:structural constituent of ribosome"/>
    <property type="evidence" value="ECO:0007669"/>
    <property type="project" value="InterPro"/>
</dbReference>
<dbReference type="GO" id="GO:0006412">
    <property type="term" value="P:translation"/>
    <property type="evidence" value="ECO:0007669"/>
    <property type="project" value="UniProtKB-UniRule"/>
</dbReference>
<dbReference type="FunFam" id="3.30.420.80:FF:000001">
    <property type="entry name" value="30S ribosomal protein S11"/>
    <property type="match status" value="1"/>
</dbReference>
<dbReference type="Gene3D" id="3.30.420.80">
    <property type="entry name" value="Ribosomal protein S11"/>
    <property type="match status" value="1"/>
</dbReference>
<dbReference type="HAMAP" id="MF_01310">
    <property type="entry name" value="Ribosomal_uS11"/>
    <property type="match status" value="1"/>
</dbReference>
<dbReference type="InterPro" id="IPR001971">
    <property type="entry name" value="Ribosomal_uS11"/>
</dbReference>
<dbReference type="InterPro" id="IPR019981">
    <property type="entry name" value="Ribosomal_uS11_bac-type"/>
</dbReference>
<dbReference type="InterPro" id="IPR018102">
    <property type="entry name" value="Ribosomal_uS11_CS"/>
</dbReference>
<dbReference type="InterPro" id="IPR036967">
    <property type="entry name" value="Ribosomal_uS11_sf"/>
</dbReference>
<dbReference type="NCBIfam" id="NF003698">
    <property type="entry name" value="PRK05309.1"/>
    <property type="match status" value="1"/>
</dbReference>
<dbReference type="NCBIfam" id="TIGR03632">
    <property type="entry name" value="uS11_bact"/>
    <property type="match status" value="1"/>
</dbReference>
<dbReference type="PANTHER" id="PTHR11759">
    <property type="entry name" value="40S RIBOSOMAL PROTEIN S14/30S RIBOSOMAL PROTEIN S11"/>
    <property type="match status" value="1"/>
</dbReference>
<dbReference type="Pfam" id="PF00411">
    <property type="entry name" value="Ribosomal_S11"/>
    <property type="match status" value="1"/>
</dbReference>
<dbReference type="PIRSF" id="PIRSF002131">
    <property type="entry name" value="Ribosomal_S11"/>
    <property type="match status" value="1"/>
</dbReference>
<dbReference type="SUPFAM" id="SSF53137">
    <property type="entry name" value="Translational machinery components"/>
    <property type="match status" value="1"/>
</dbReference>
<dbReference type="PROSITE" id="PS00054">
    <property type="entry name" value="RIBOSOMAL_S11"/>
    <property type="match status" value="1"/>
</dbReference>
<name>RS11_DESAP</name>
<reference key="1">
    <citation type="submission" date="2007-10" db="EMBL/GenBank/DDBJ databases">
        <title>Complete sequence of chromosome of Desulforudis audaxviator MP104C.</title>
        <authorList>
            <person name="Copeland A."/>
            <person name="Lucas S."/>
            <person name="Lapidus A."/>
            <person name="Barry K."/>
            <person name="Glavina del Rio T."/>
            <person name="Dalin E."/>
            <person name="Tice H."/>
            <person name="Bruce D."/>
            <person name="Pitluck S."/>
            <person name="Lowry S.R."/>
            <person name="Larimer F."/>
            <person name="Land M.L."/>
            <person name="Hauser L."/>
            <person name="Kyrpides N."/>
            <person name="Ivanova N.N."/>
            <person name="Richardson P."/>
        </authorList>
    </citation>
    <scope>NUCLEOTIDE SEQUENCE [LARGE SCALE GENOMIC DNA]</scope>
    <source>
        <strain>MP104C</strain>
    </source>
</reference>
<accession>B1I1B1</accession>
<feature type="chain" id="PRO_1000165543" description="Small ribosomal subunit protein uS11">
    <location>
        <begin position="1"/>
        <end position="128"/>
    </location>
</feature>
<sequence>MARRPRAKKKERKNIETGVAHIKSTFNNTVITISDVRGNAISWSSAGTVGFKGSRKSTPFAAQLAAEKAAREAMEHGMREVAVMVKGPGAGREAAIRSLQAAGLEVSLIKDVTPIPHNGCRPPKRRRV</sequence>
<keyword id="KW-1185">Reference proteome</keyword>
<keyword id="KW-0687">Ribonucleoprotein</keyword>
<keyword id="KW-0689">Ribosomal protein</keyword>
<keyword id="KW-0694">RNA-binding</keyword>
<keyword id="KW-0699">rRNA-binding</keyword>